<protein>
    <recommendedName>
        <fullName evidence="1">2,3,4,5-tetrahydropyridine-2,6-dicarboxylate N-succinyltransferase</fullName>
        <ecNumber evidence="1">2.3.1.117</ecNumber>
    </recommendedName>
    <alternativeName>
        <fullName evidence="1">Tetrahydrodipicolinate N-succinyltransferase</fullName>
        <shortName evidence="1">THDP succinyltransferase</shortName>
        <shortName evidence="1">THP succinyltransferase</shortName>
        <shortName evidence="1">Tetrahydropicolinate succinylase</shortName>
    </alternativeName>
</protein>
<keyword id="KW-0012">Acyltransferase</keyword>
<keyword id="KW-0028">Amino-acid biosynthesis</keyword>
<keyword id="KW-0963">Cytoplasm</keyword>
<keyword id="KW-0220">Diaminopimelate biosynthesis</keyword>
<keyword id="KW-0457">Lysine biosynthesis</keyword>
<keyword id="KW-0677">Repeat</keyword>
<keyword id="KW-0808">Transferase</keyword>
<accession>A7ZWB2</accession>
<organism>
    <name type="scientific">Escherichia coli O9:H4 (strain HS)</name>
    <dbReference type="NCBI Taxonomy" id="331112"/>
    <lineage>
        <taxon>Bacteria</taxon>
        <taxon>Pseudomonadati</taxon>
        <taxon>Pseudomonadota</taxon>
        <taxon>Gammaproteobacteria</taxon>
        <taxon>Enterobacterales</taxon>
        <taxon>Enterobacteriaceae</taxon>
        <taxon>Escherichia</taxon>
    </lineage>
</organism>
<gene>
    <name evidence="1" type="primary">dapD</name>
    <name type="ordered locus">EcHS_A0168</name>
</gene>
<dbReference type="EC" id="2.3.1.117" evidence="1"/>
<dbReference type="EMBL" id="CP000802">
    <property type="protein sequence ID" value="ABV04566.1"/>
    <property type="molecule type" value="Genomic_DNA"/>
</dbReference>
<dbReference type="RefSeq" id="WP_001186650.1">
    <property type="nucleotide sequence ID" value="NC_009800.1"/>
</dbReference>
<dbReference type="SMR" id="A7ZWB2"/>
<dbReference type="GeneID" id="93777259"/>
<dbReference type="KEGG" id="ecx:EcHS_A0168"/>
<dbReference type="HOGENOM" id="CLU_050859_0_1_6"/>
<dbReference type="UniPathway" id="UPA00034">
    <property type="reaction ID" value="UER00019"/>
</dbReference>
<dbReference type="GO" id="GO:0005737">
    <property type="term" value="C:cytoplasm"/>
    <property type="evidence" value="ECO:0007669"/>
    <property type="project" value="UniProtKB-SubCell"/>
</dbReference>
<dbReference type="GO" id="GO:0008666">
    <property type="term" value="F:2,3,4,5-tetrahydropyridine-2,6-dicarboxylate N-succinyltransferase activity"/>
    <property type="evidence" value="ECO:0007669"/>
    <property type="project" value="UniProtKB-UniRule"/>
</dbReference>
<dbReference type="GO" id="GO:0016779">
    <property type="term" value="F:nucleotidyltransferase activity"/>
    <property type="evidence" value="ECO:0007669"/>
    <property type="project" value="TreeGrafter"/>
</dbReference>
<dbReference type="GO" id="GO:0019877">
    <property type="term" value="P:diaminopimelate biosynthetic process"/>
    <property type="evidence" value="ECO:0007669"/>
    <property type="project" value="UniProtKB-UniRule"/>
</dbReference>
<dbReference type="GO" id="GO:0009089">
    <property type="term" value="P:lysine biosynthetic process via diaminopimelate"/>
    <property type="evidence" value="ECO:0007669"/>
    <property type="project" value="UniProtKB-UniRule"/>
</dbReference>
<dbReference type="CDD" id="cd03350">
    <property type="entry name" value="LbH_THP_succinylT"/>
    <property type="match status" value="1"/>
</dbReference>
<dbReference type="FunFam" id="1.10.166.10:FF:000001">
    <property type="entry name" value="2,3,4,5-tetrahydropyridine-2,6-dicarboxylate N-succinyltransferase"/>
    <property type="match status" value="1"/>
</dbReference>
<dbReference type="FunFam" id="2.160.10.10:FF:000004">
    <property type="entry name" value="2,3,4,5-tetrahydropyridine-2,6-dicarboxylate N-succinyltransferase"/>
    <property type="match status" value="1"/>
</dbReference>
<dbReference type="Gene3D" id="2.160.10.10">
    <property type="entry name" value="Hexapeptide repeat proteins"/>
    <property type="match status" value="1"/>
</dbReference>
<dbReference type="Gene3D" id="1.10.166.10">
    <property type="entry name" value="Tetrahydrodipicolinate-N-succinyltransferase, N-terminal domain"/>
    <property type="match status" value="1"/>
</dbReference>
<dbReference type="HAMAP" id="MF_00811">
    <property type="entry name" value="DapD"/>
    <property type="match status" value="1"/>
</dbReference>
<dbReference type="InterPro" id="IPR005664">
    <property type="entry name" value="DapD_Trfase_Hexpep_rpt_fam"/>
</dbReference>
<dbReference type="InterPro" id="IPR001451">
    <property type="entry name" value="Hexapep"/>
</dbReference>
<dbReference type="InterPro" id="IPR018357">
    <property type="entry name" value="Hexapep_transf_CS"/>
</dbReference>
<dbReference type="InterPro" id="IPR023180">
    <property type="entry name" value="THP_succinylTrfase_dom1"/>
</dbReference>
<dbReference type="InterPro" id="IPR037133">
    <property type="entry name" value="THP_succinylTrfase_N_sf"/>
</dbReference>
<dbReference type="InterPro" id="IPR011004">
    <property type="entry name" value="Trimer_LpxA-like_sf"/>
</dbReference>
<dbReference type="NCBIfam" id="TIGR00965">
    <property type="entry name" value="dapD"/>
    <property type="match status" value="1"/>
</dbReference>
<dbReference type="NCBIfam" id="NF008808">
    <property type="entry name" value="PRK11830.1"/>
    <property type="match status" value="1"/>
</dbReference>
<dbReference type="PANTHER" id="PTHR19136:SF52">
    <property type="entry name" value="2,3,4,5-TETRAHYDROPYRIDINE-2,6-DICARBOXYLATE N-SUCCINYLTRANSFERASE"/>
    <property type="match status" value="1"/>
</dbReference>
<dbReference type="PANTHER" id="PTHR19136">
    <property type="entry name" value="MOLYBDENUM COFACTOR GUANYLYLTRANSFERASE"/>
    <property type="match status" value="1"/>
</dbReference>
<dbReference type="Pfam" id="PF14602">
    <property type="entry name" value="Hexapep_2"/>
    <property type="match status" value="1"/>
</dbReference>
<dbReference type="Pfam" id="PF14805">
    <property type="entry name" value="THDPS_N_2"/>
    <property type="match status" value="1"/>
</dbReference>
<dbReference type="SUPFAM" id="SSF51161">
    <property type="entry name" value="Trimeric LpxA-like enzymes"/>
    <property type="match status" value="1"/>
</dbReference>
<dbReference type="PROSITE" id="PS00101">
    <property type="entry name" value="HEXAPEP_TRANSFERASES"/>
    <property type="match status" value="1"/>
</dbReference>
<evidence type="ECO:0000255" key="1">
    <source>
        <dbReference type="HAMAP-Rule" id="MF_00811"/>
    </source>
</evidence>
<reference key="1">
    <citation type="journal article" date="2008" name="J. Bacteriol.">
        <title>The pangenome structure of Escherichia coli: comparative genomic analysis of E. coli commensal and pathogenic isolates.</title>
        <authorList>
            <person name="Rasko D.A."/>
            <person name="Rosovitz M.J."/>
            <person name="Myers G.S.A."/>
            <person name="Mongodin E.F."/>
            <person name="Fricke W.F."/>
            <person name="Gajer P."/>
            <person name="Crabtree J."/>
            <person name="Sebaihia M."/>
            <person name="Thomson N.R."/>
            <person name="Chaudhuri R."/>
            <person name="Henderson I.R."/>
            <person name="Sperandio V."/>
            <person name="Ravel J."/>
        </authorList>
    </citation>
    <scope>NUCLEOTIDE SEQUENCE [LARGE SCALE GENOMIC DNA]</scope>
    <source>
        <strain>HS</strain>
    </source>
</reference>
<proteinExistence type="inferred from homology"/>
<sequence length="274" mass="29892">MQQLQNIIETAFERRAEITPANADTVTREAVNQVIALLDSGALRVAEKIDGQWVTHQWLKKAVLLSFRINDNQVIEGAESRYFDKVPMKFADYDEARFQKEGFRVVPPAAVRQGAFIARNTVLMPSYVNIGAYVDEGTMVDTWATVGSCAQIGKNVHLSGGVGIGGVLEPLQANPTIIEDNCFIGARSEVVEGVIVEEGSVISMGVYIGQSTRIYDRETGEIHYGRVPAGSVVVSGNLPSKDGKYSLYCAVIVKKVDAKTRGKVGINELLRTID</sequence>
<feature type="chain" id="PRO_1000062278" description="2,3,4,5-tetrahydropyridine-2,6-dicarboxylate N-succinyltransferase">
    <location>
        <begin position="1"/>
        <end position="274"/>
    </location>
</feature>
<feature type="binding site" evidence="1">
    <location>
        <position position="104"/>
    </location>
    <ligand>
        <name>substrate</name>
    </ligand>
</feature>
<feature type="binding site" evidence="1">
    <location>
        <position position="141"/>
    </location>
    <ligand>
        <name>substrate</name>
    </ligand>
</feature>
<comment type="catalytic activity">
    <reaction evidence="1">
        <text>(S)-2,3,4,5-tetrahydrodipicolinate + succinyl-CoA + H2O = (S)-2-succinylamino-6-oxoheptanedioate + CoA</text>
        <dbReference type="Rhea" id="RHEA:17325"/>
        <dbReference type="ChEBI" id="CHEBI:15377"/>
        <dbReference type="ChEBI" id="CHEBI:15685"/>
        <dbReference type="ChEBI" id="CHEBI:16845"/>
        <dbReference type="ChEBI" id="CHEBI:57287"/>
        <dbReference type="ChEBI" id="CHEBI:57292"/>
        <dbReference type="EC" id="2.3.1.117"/>
    </reaction>
</comment>
<comment type="pathway">
    <text evidence="1">Amino-acid biosynthesis; L-lysine biosynthesis via DAP pathway; LL-2,6-diaminopimelate from (S)-tetrahydrodipicolinate (succinylase route): step 1/3.</text>
</comment>
<comment type="subunit">
    <text evidence="1">Homotrimer.</text>
</comment>
<comment type="subcellular location">
    <subcellularLocation>
        <location evidence="1">Cytoplasm</location>
    </subcellularLocation>
</comment>
<comment type="similarity">
    <text evidence="1">Belongs to the transferase hexapeptide repeat family.</text>
</comment>
<name>DAPD_ECOHS</name>